<keyword id="KW-1017">Isopeptide bond</keyword>
<keyword id="KW-0539">Nucleus</keyword>
<keyword id="KW-0597">Phosphoprotein</keyword>
<keyword id="KW-1185">Reference proteome</keyword>
<keyword id="KW-0804">Transcription</keyword>
<keyword id="KW-0805">Transcription regulation</keyword>
<keyword id="KW-0832">Ubl conjugation</keyword>
<comment type="subunit">
    <text evidence="1">Component of the STAGA transcription coactivator-HAT complex, at least composed of SUPT3H, SUPT7L, GCN5L2, TAF5L, TAF6L, TADA3L, TAD1L, TAF10, TAF12 and TAF9.</text>
</comment>
<comment type="subcellular location">
    <subcellularLocation>
        <location evidence="1">Nucleus</location>
    </subcellularLocation>
</comment>
<comment type="PTM">
    <text evidence="1">Sumoylated.</text>
</comment>
<organism>
    <name type="scientific">Mus musculus</name>
    <name type="common">Mouse</name>
    <dbReference type="NCBI Taxonomy" id="10090"/>
    <lineage>
        <taxon>Eukaryota</taxon>
        <taxon>Metazoa</taxon>
        <taxon>Chordata</taxon>
        <taxon>Craniata</taxon>
        <taxon>Vertebrata</taxon>
        <taxon>Euteleostomi</taxon>
        <taxon>Mammalia</taxon>
        <taxon>Eutheria</taxon>
        <taxon>Euarchontoglires</taxon>
        <taxon>Glires</taxon>
        <taxon>Rodentia</taxon>
        <taxon>Myomorpha</taxon>
        <taxon>Muroidea</taxon>
        <taxon>Muridae</taxon>
        <taxon>Murinae</taxon>
        <taxon>Mus</taxon>
        <taxon>Mus</taxon>
    </lineage>
</organism>
<sequence>MLRYWGEIPIPSGQTNRSSFDLLPREFRLVEVHDPPLHQPSANKPKPPTMLDIPSEPCSLTIHTIQLIQHNRRLRSLIATAQTQSQQQTEGVKAEESEPLPSCPGSPPLPDDLQPLDCKNPNAPFQIRHSDPESDFYRGKGEPVTELSWHSCRQLLYQAVATILAHTGFECANESVLETLTDVAHEYCLKFTKLLRFAVDREALLGQTPFPDVMEQVFHEVGIGSVLSLQKFWQHRIKDYHTYMLQISKQLSEEYERIVNPEKATEDTKPVKIKEEPVSDITFPVSEELEADLASGDQSLPIGVLGAQSERFPSNLEVEASPQAPSAEVNASPLWNLAHVKMEPQESEEGNVSAHGVLGSDVFEEPMSGMSEAGLPQSPDDSDSSYGSHSTDSLMGSSPVFNQRCRKRMRKI</sequence>
<reference key="1">
    <citation type="journal article" date="2005" name="Science">
        <title>The transcriptional landscape of the mammalian genome.</title>
        <authorList>
            <person name="Carninci P."/>
            <person name="Kasukawa T."/>
            <person name="Katayama S."/>
            <person name="Gough J."/>
            <person name="Frith M.C."/>
            <person name="Maeda N."/>
            <person name="Oyama R."/>
            <person name="Ravasi T."/>
            <person name="Lenhard B."/>
            <person name="Wells C."/>
            <person name="Kodzius R."/>
            <person name="Shimokawa K."/>
            <person name="Bajic V.B."/>
            <person name="Brenner S.E."/>
            <person name="Batalov S."/>
            <person name="Forrest A.R."/>
            <person name="Zavolan M."/>
            <person name="Davis M.J."/>
            <person name="Wilming L.G."/>
            <person name="Aidinis V."/>
            <person name="Allen J.E."/>
            <person name="Ambesi-Impiombato A."/>
            <person name="Apweiler R."/>
            <person name="Aturaliya R.N."/>
            <person name="Bailey T.L."/>
            <person name="Bansal M."/>
            <person name="Baxter L."/>
            <person name="Beisel K.W."/>
            <person name="Bersano T."/>
            <person name="Bono H."/>
            <person name="Chalk A.M."/>
            <person name="Chiu K.P."/>
            <person name="Choudhary V."/>
            <person name="Christoffels A."/>
            <person name="Clutterbuck D.R."/>
            <person name="Crowe M.L."/>
            <person name="Dalla E."/>
            <person name="Dalrymple B.P."/>
            <person name="de Bono B."/>
            <person name="Della Gatta G."/>
            <person name="di Bernardo D."/>
            <person name="Down T."/>
            <person name="Engstrom P."/>
            <person name="Fagiolini M."/>
            <person name="Faulkner G."/>
            <person name="Fletcher C.F."/>
            <person name="Fukushima T."/>
            <person name="Furuno M."/>
            <person name="Futaki S."/>
            <person name="Gariboldi M."/>
            <person name="Georgii-Hemming P."/>
            <person name="Gingeras T.R."/>
            <person name="Gojobori T."/>
            <person name="Green R.E."/>
            <person name="Gustincich S."/>
            <person name="Harbers M."/>
            <person name="Hayashi Y."/>
            <person name="Hensch T.K."/>
            <person name="Hirokawa N."/>
            <person name="Hill D."/>
            <person name="Huminiecki L."/>
            <person name="Iacono M."/>
            <person name="Ikeo K."/>
            <person name="Iwama A."/>
            <person name="Ishikawa T."/>
            <person name="Jakt M."/>
            <person name="Kanapin A."/>
            <person name="Katoh M."/>
            <person name="Kawasawa Y."/>
            <person name="Kelso J."/>
            <person name="Kitamura H."/>
            <person name="Kitano H."/>
            <person name="Kollias G."/>
            <person name="Krishnan S.P."/>
            <person name="Kruger A."/>
            <person name="Kummerfeld S.K."/>
            <person name="Kurochkin I.V."/>
            <person name="Lareau L.F."/>
            <person name="Lazarevic D."/>
            <person name="Lipovich L."/>
            <person name="Liu J."/>
            <person name="Liuni S."/>
            <person name="McWilliam S."/>
            <person name="Madan Babu M."/>
            <person name="Madera M."/>
            <person name="Marchionni L."/>
            <person name="Matsuda H."/>
            <person name="Matsuzawa S."/>
            <person name="Miki H."/>
            <person name="Mignone F."/>
            <person name="Miyake S."/>
            <person name="Morris K."/>
            <person name="Mottagui-Tabar S."/>
            <person name="Mulder N."/>
            <person name="Nakano N."/>
            <person name="Nakauchi H."/>
            <person name="Ng P."/>
            <person name="Nilsson R."/>
            <person name="Nishiguchi S."/>
            <person name="Nishikawa S."/>
            <person name="Nori F."/>
            <person name="Ohara O."/>
            <person name="Okazaki Y."/>
            <person name="Orlando V."/>
            <person name="Pang K.C."/>
            <person name="Pavan W.J."/>
            <person name="Pavesi G."/>
            <person name="Pesole G."/>
            <person name="Petrovsky N."/>
            <person name="Piazza S."/>
            <person name="Reed J."/>
            <person name="Reid J.F."/>
            <person name="Ring B.Z."/>
            <person name="Ringwald M."/>
            <person name="Rost B."/>
            <person name="Ruan Y."/>
            <person name="Salzberg S.L."/>
            <person name="Sandelin A."/>
            <person name="Schneider C."/>
            <person name="Schoenbach C."/>
            <person name="Sekiguchi K."/>
            <person name="Semple C.A."/>
            <person name="Seno S."/>
            <person name="Sessa L."/>
            <person name="Sheng Y."/>
            <person name="Shibata Y."/>
            <person name="Shimada H."/>
            <person name="Shimada K."/>
            <person name="Silva D."/>
            <person name="Sinclair B."/>
            <person name="Sperling S."/>
            <person name="Stupka E."/>
            <person name="Sugiura K."/>
            <person name="Sultana R."/>
            <person name="Takenaka Y."/>
            <person name="Taki K."/>
            <person name="Tammoja K."/>
            <person name="Tan S.L."/>
            <person name="Tang S."/>
            <person name="Taylor M.S."/>
            <person name="Tegner J."/>
            <person name="Teichmann S.A."/>
            <person name="Ueda H.R."/>
            <person name="van Nimwegen E."/>
            <person name="Verardo R."/>
            <person name="Wei C.L."/>
            <person name="Yagi K."/>
            <person name="Yamanishi H."/>
            <person name="Zabarovsky E."/>
            <person name="Zhu S."/>
            <person name="Zimmer A."/>
            <person name="Hide W."/>
            <person name="Bult C."/>
            <person name="Grimmond S.M."/>
            <person name="Teasdale R.D."/>
            <person name="Liu E.T."/>
            <person name="Brusic V."/>
            <person name="Quackenbush J."/>
            <person name="Wahlestedt C."/>
            <person name="Mattick J.S."/>
            <person name="Hume D.A."/>
            <person name="Kai C."/>
            <person name="Sasaki D."/>
            <person name="Tomaru Y."/>
            <person name="Fukuda S."/>
            <person name="Kanamori-Katayama M."/>
            <person name="Suzuki M."/>
            <person name="Aoki J."/>
            <person name="Arakawa T."/>
            <person name="Iida J."/>
            <person name="Imamura K."/>
            <person name="Itoh M."/>
            <person name="Kato T."/>
            <person name="Kawaji H."/>
            <person name="Kawagashira N."/>
            <person name="Kawashima T."/>
            <person name="Kojima M."/>
            <person name="Kondo S."/>
            <person name="Konno H."/>
            <person name="Nakano K."/>
            <person name="Ninomiya N."/>
            <person name="Nishio T."/>
            <person name="Okada M."/>
            <person name="Plessy C."/>
            <person name="Shibata K."/>
            <person name="Shiraki T."/>
            <person name="Suzuki S."/>
            <person name="Tagami M."/>
            <person name="Waki K."/>
            <person name="Watahiki A."/>
            <person name="Okamura-Oho Y."/>
            <person name="Suzuki H."/>
            <person name="Kawai J."/>
            <person name="Hayashizaki Y."/>
        </authorList>
    </citation>
    <scope>NUCLEOTIDE SEQUENCE [LARGE SCALE MRNA]</scope>
    <source>
        <strain>C57BL/6J</strain>
        <tissue>Embryo</tissue>
    </source>
</reference>
<reference key="2">
    <citation type="journal article" date="2004" name="Genome Res.">
        <title>The status, quality, and expansion of the NIH full-length cDNA project: the Mammalian Gene Collection (MGC).</title>
        <authorList>
            <consortium name="The MGC Project Team"/>
        </authorList>
    </citation>
    <scope>NUCLEOTIDE SEQUENCE [LARGE SCALE MRNA]</scope>
    <source>
        <tissue>Retina</tissue>
    </source>
</reference>
<reference key="3">
    <citation type="journal article" date="2010" name="Cell">
        <title>A tissue-specific atlas of mouse protein phosphorylation and expression.</title>
        <authorList>
            <person name="Huttlin E.L."/>
            <person name="Jedrychowski M.P."/>
            <person name="Elias J.E."/>
            <person name="Goswami T."/>
            <person name="Rad R."/>
            <person name="Beausoleil S.A."/>
            <person name="Villen J."/>
            <person name="Haas W."/>
            <person name="Sowa M.E."/>
            <person name="Gygi S.P."/>
        </authorList>
    </citation>
    <scope>PHOSPHORYLATION [LARGE SCALE ANALYSIS] AT SER-321 AND SER-332</scope>
    <scope>IDENTIFICATION BY MASS SPECTROMETRY [LARGE SCALE ANALYSIS]</scope>
    <source>
        <tissue>Brain</tissue>
        <tissue>Kidney</tissue>
        <tissue>Liver</tissue>
        <tissue>Spleen</tissue>
        <tissue>Testis</tissue>
    </source>
</reference>
<proteinExistence type="evidence at protein level"/>
<feature type="chain" id="PRO_0000072234" description="STAGA complex 65 subunit gamma">
    <location>
        <begin position="1"/>
        <end position="412"/>
    </location>
</feature>
<feature type="region of interest" description="Disordered" evidence="3">
    <location>
        <begin position="81"/>
        <end position="107"/>
    </location>
</feature>
<feature type="region of interest" description="Disordered" evidence="3">
    <location>
        <begin position="364"/>
        <end position="412"/>
    </location>
</feature>
<feature type="compositionally biased region" description="Low complexity" evidence="3">
    <location>
        <begin position="384"/>
        <end position="393"/>
    </location>
</feature>
<feature type="modified residue" description="Phosphoserine" evidence="2">
    <location>
        <position position="106"/>
    </location>
</feature>
<feature type="modified residue" description="Phosphoserine" evidence="4">
    <location>
        <position position="321"/>
    </location>
</feature>
<feature type="modified residue" description="Phosphoserine" evidence="4">
    <location>
        <position position="332"/>
    </location>
</feature>
<feature type="cross-link" description="Glycyl lysine isopeptide (Lys-Gly) (interchain with G-Cter in SUMO2)" evidence="2">
    <location>
        <position position="269"/>
    </location>
</feature>
<accession>Q9CZV5</accession>
<name>ST65G_MOUSE</name>
<evidence type="ECO:0000250" key="1"/>
<evidence type="ECO:0000250" key="2">
    <source>
        <dbReference type="UniProtKB" id="O94864"/>
    </source>
</evidence>
<evidence type="ECO:0000256" key="3">
    <source>
        <dbReference type="SAM" id="MobiDB-lite"/>
    </source>
</evidence>
<evidence type="ECO:0007744" key="4">
    <source>
    </source>
</evidence>
<dbReference type="EMBL" id="AK012134">
    <property type="protein sequence ID" value="BAB28053.1"/>
    <property type="molecule type" value="mRNA"/>
</dbReference>
<dbReference type="EMBL" id="BC031447">
    <property type="protein sequence ID" value="AAH31447.1"/>
    <property type="molecule type" value="mRNA"/>
</dbReference>
<dbReference type="CCDS" id="CCDS19186.1"/>
<dbReference type="RefSeq" id="NP_082426.1">
    <property type="nucleotide sequence ID" value="NM_028150.2"/>
</dbReference>
<dbReference type="SMR" id="Q9CZV5"/>
<dbReference type="ComplexPortal" id="CPX-6803">
    <property type="entry name" value="SAGA complex, KAT2B variant"/>
</dbReference>
<dbReference type="ComplexPortal" id="CPX-920">
    <property type="entry name" value="SAGA complex, KAT2A variant"/>
</dbReference>
<dbReference type="FunCoup" id="Q9CZV5">
    <property type="interactions" value="4363"/>
</dbReference>
<dbReference type="STRING" id="10090.ENSMUSP00000067337"/>
<dbReference type="iPTMnet" id="Q9CZV5"/>
<dbReference type="PhosphoSitePlus" id="Q9CZV5"/>
<dbReference type="jPOST" id="Q9CZV5"/>
<dbReference type="PaxDb" id="10090-ENSMUSP00000067337"/>
<dbReference type="PeptideAtlas" id="Q9CZV5"/>
<dbReference type="ProteomicsDB" id="254576"/>
<dbReference type="Pumba" id="Q9CZV5"/>
<dbReference type="Antibodypedia" id="50579">
    <property type="antibodies" value="99 antibodies from 19 providers"/>
</dbReference>
<dbReference type="DNASU" id="72195"/>
<dbReference type="Ensembl" id="ENSMUST00000065388.11">
    <property type="protein sequence ID" value="ENSMUSP00000067337.5"/>
    <property type="gene ID" value="ENSMUSG00000053134.14"/>
</dbReference>
<dbReference type="Ensembl" id="ENSMUST00000201769.4">
    <property type="protein sequence ID" value="ENSMUSP00000144065.2"/>
    <property type="gene ID" value="ENSMUSG00000053134.14"/>
</dbReference>
<dbReference type="GeneID" id="72195"/>
<dbReference type="KEGG" id="mmu:72195"/>
<dbReference type="UCSC" id="uc008wyj.2">
    <property type="organism name" value="mouse"/>
</dbReference>
<dbReference type="AGR" id="MGI:1919445"/>
<dbReference type="CTD" id="9913"/>
<dbReference type="MGI" id="MGI:1919445">
    <property type="gene designation" value="Supt7l"/>
</dbReference>
<dbReference type="VEuPathDB" id="HostDB:ENSMUSG00000053134"/>
<dbReference type="eggNOG" id="ENOG502QQTJ">
    <property type="taxonomic scope" value="Eukaryota"/>
</dbReference>
<dbReference type="GeneTree" id="ENSGT00390000005572"/>
<dbReference type="InParanoid" id="Q9CZV5"/>
<dbReference type="OMA" id="ELSWNSC"/>
<dbReference type="OrthoDB" id="6021257at2759"/>
<dbReference type="PhylomeDB" id="Q9CZV5"/>
<dbReference type="TreeFam" id="TF328615"/>
<dbReference type="BioGRID-ORCS" id="72195">
    <property type="hits" value="5 hits in 81 CRISPR screens"/>
</dbReference>
<dbReference type="ChiTaRS" id="Supt7l">
    <property type="organism name" value="mouse"/>
</dbReference>
<dbReference type="PRO" id="PR:Q9CZV5"/>
<dbReference type="Proteomes" id="UP000000589">
    <property type="component" value="Chromosome 5"/>
</dbReference>
<dbReference type="RNAct" id="Q9CZV5">
    <property type="molecule type" value="protein"/>
</dbReference>
<dbReference type="Bgee" id="ENSMUSG00000053134">
    <property type="expression patterns" value="Expressed in rostral migratory stream and 193 other cell types or tissues"/>
</dbReference>
<dbReference type="ExpressionAtlas" id="Q9CZV5">
    <property type="expression patterns" value="baseline and differential"/>
</dbReference>
<dbReference type="GO" id="GO:0005654">
    <property type="term" value="C:nucleoplasm"/>
    <property type="evidence" value="ECO:0007669"/>
    <property type="project" value="Ensembl"/>
</dbReference>
<dbReference type="GO" id="GO:0000124">
    <property type="term" value="C:SAGA complex"/>
    <property type="evidence" value="ECO:0000303"/>
    <property type="project" value="ComplexPortal"/>
</dbReference>
<dbReference type="GO" id="GO:0046982">
    <property type="term" value="F:protein heterodimerization activity"/>
    <property type="evidence" value="ECO:0007669"/>
    <property type="project" value="InterPro"/>
</dbReference>
<dbReference type="GO" id="GO:0003713">
    <property type="term" value="F:transcription coactivator activity"/>
    <property type="evidence" value="ECO:0007669"/>
    <property type="project" value="Ensembl"/>
</dbReference>
<dbReference type="GO" id="GO:0051457">
    <property type="term" value="P:maintenance of protein location in nucleus"/>
    <property type="evidence" value="ECO:0007669"/>
    <property type="project" value="Ensembl"/>
</dbReference>
<dbReference type="GO" id="GO:0045893">
    <property type="term" value="P:positive regulation of DNA-templated transcription"/>
    <property type="evidence" value="ECO:0000303"/>
    <property type="project" value="ComplexPortal"/>
</dbReference>
<dbReference type="GO" id="GO:0006282">
    <property type="term" value="P:regulation of DNA repair"/>
    <property type="evidence" value="ECO:0000303"/>
    <property type="project" value="ComplexPortal"/>
</dbReference>
<dbReference type="GO" id="GO:0043484">
    <property type="term" value="P:regulation of RNA splicing"/>
    <property type="evidence" value="ECO:0000303"/>
    <property type="project" value="ComplexPortal"/>
</dbReference>
<dbReference type="CDD" id="cd06847">
    <property type="entry name" value="HFD_SUPT7L"/>
    <property type="match status" value="1"/>
</dbReference>
<dbReference type="FunFam" id="1.10.20.10:FF:000034">
    <property type="entry name" value="STAGA complex 65 subunit gamma"/>
    <property type="match status" value="1"/>
</dbReference>
<dbReference type="Gene3D" id="1.10.20.10">
    <property type="entry name" value="Histone, subunit A"/>
    <property type="match status" value="1"/>
</dbReference>
<dbReference type="InterPro" id="IPR006565">
    <property type="entry name" value="BTP"/>
</dbReference>
<dbReference type="InterPro" id="IPR009072">
    <property type="entry name" value="Histone-fold"/>
</dbReference>
<dbReference type="InterPro" id="IPR039460">
    <property type="entry name" value="SUPT7L"/>
</dbReference>
<dbReference type="PANTHER" id="PTHR28598">
    <property type="entry name" value="STAGA COMPLEX 65 SUBUNIT GAMMA"/>
    <property type="match status" value="1"/>
</dbReference>
<dbReference type="PANTHER" id="PTHR28598:SF1">
    <property type="entry name" value="STAGA COMPLEX 65 SUBUNIT GAMMA"/>
    <property type="match status" value="1"/>
</dbReference>
<dbReference type="Pfam" id="PF07524">
    <property type="entry name" value="Bromo_TP"/>
    <property type="match status" value="1"/>
</dbReference>
<dbReference type="SMART" id="SM00576">
    <property type="entry name" value="BTP"/>
    <property type="match status" value="1"/>
</dbReference>
<gene>
    <name type="primary">Supt7l</name>
</gene>
<protein>
    <recommendedName>
        <fullName>STAGA complex 65 subunit gamma</fullName>
    </recommendedName>
    <alternativeName>
        <fullName>SPTF-associated factor 65 gamma</fullName>
        <shortName>STAF65gamma</shortName>
    </alternativeName>
    <alternativeName>
        <fullName>Suppressor of Ty 7-like</fullName>
    </alternativeName>
</protein>